<organism>
    <name type="scientific">Granulibacter bethesdensis (strain ATCC BAA-1260 / CGDNIH1)</name>
    <dbReference type="NCBI Taxonomy" id="391165"/>
    <lineage>
        <taxon>Bacteria</taxon>
        <taxon>Pseudomonadati</taxon>
        <taxon>Pseudomonadota</taxon>
        <taxon>Alphaproteobacteria</taxon>
        <taxon>Acetobacterales</taxon>
        <taxon>Acetobacteraceae</taxon>
        <taxon>Granulibacter</taxon>
    </lineage>
</organism>
<proteinExistence type="inferred from homology"/>
<feature type="chain" id="PRO_0000319688" description="Phosphoribosyl-AMP cyclohydrolase">
    <location>
        <begin position="1"/>
        <end position="128"/>
    </location>
</feature>
<feature type="binding site" evidence="1">
    <location>
        <position position="77"/>
    </location>
    <ligand>
        <name>Mg(2+)</name>
        <dbReference type="ChEBI" id="CHEBI:18420"/>
    </ligand>
</feature>
<feature type="binding site" evidence="1">
    <location>
        <position position="78"/>
    </location>
    <ligand>
        <name>Zn(2+)</name>
        <dbReference type="ChEBI" id="CHEBI:29105"/>
        <note>ligand shared between dimeric partners</note>
    </ligand>
</feature>
<feature type="binding site" evidence="1">
    <location>
        <position position="79"/>
    </location>
    <ligand>
        <name>Mg(2+)</name>
        <dbReference type="ChEBI" id="CHEBI:18420"/>
    </ligand>
</feature>
<feature type="binding site" evidence="1">
    <location>
        <position position="81"/>
    </location>
    <ligand>
        <name>Mg(2+)</name>
        <dbReference type="ChEBI" id="CHEBI:18420"/>
    </ligand>
</feature>
<feature type="binding site" evidence="1">
    <location>
        <position position="94"/>
    </location>
    <ligand>
        <name>Zn(2+)</name>
        <dbReference type="ChEBI" id="CHEBI:29105"/>
        <note>ligand shared between dimeric partners</note>
    </ligand>
</feature>
<feature type="binding site" evidence="1">
    <location>
        <position position="101"/>
    </location>
    <ligand>
        <name>Zn(2+)</name>
        <dbReference type="ChEBI" id="CHEBI:29105"/>
        <note>ligand shared between dimeric partners</note>
    </ligand>
</feature>
<name>HIS3_GRABC</name>
<protein>
    <recommendedName>
        <fullName evidence="1">Phosphoribosyl-AMP cyclohydrolase</fullName>
        <shortName evidence="1">PRA-CH</shortName>
        <ecNumber evidence="1">3.5.4.19</ecNumber>
    </recommendedName>
</protein>
<sequence length="128" mass="14223">MSDVFDIIRFNDQGLVTAIAQQHDTGEVLMLAWMNREAIEETLATGRVCYFSRSRNGLWRKGETSGQVQTLIELRVDCDGDALLVLVDQPGVACHTGRRSCFYRAMGKDGTVTTLTEPLIDPHTLYGS</sequence>
<reference key="1">
    <citation type="journal article" date="2007" name="J. Bacteriol.">
        <title>Genome sequence analysis of the emerging human pathogenic acetic acid bacterium Granulibacter bethesdensis.</title>
        <authorList>
            <person name="Greenberg D.E."/>
            <person name="Porcella S.F."/>
            <person name="Zelazny A.M."/>
            <person name="Virtaneva K."/>
            <person name="Sturdevant D.E."/>
            <person name="Kupko J.J. III"/>
            <person name="Barbian K.D."/>
            <person name="Babar A."/>
            <person name="Dorward D.W."/>
            <person name="Holland S.M."/>
        </authorList>
    </citation>
    <scope>NUCLEOTIDE SEQUENCE [LARGE SCALE GENOMIC DNA]</scope>
    <source>
        <strain>ATCC BAA-1260 / CGDNIH1</strain>
    </source>
</reference>
<dbReference type="EC" id="3.5.4.19" evidence="1"/>
<dbReference type="EMBL" id="CP000394">
    <property type="protein sequence ID" value="ABI61867.1"/>
    <property type="molecule type" value="Genomic_DNA"/>
</dbReference>
<dbReference type="RefSeq" id="WP_011631676.1">
    <property type="nucleotide sequence ID" value="NC_008343.2"/>
</dbReference>
<dbReference type="SMR" id="Q0BTI5"/>
<dbReference type="STRING" id="391165.GbCGDNIH1_0969"/>
<dbReference type="KEGG" id="gbe:GbCGDNIH1_0969"/>
<dbReference type="eggNOG" id="COG0139">
    <property type="taxonomic scope" value="Bacteria"/>
</dbReference>
<dbReference type="HOGENOM" id="CLU_048577_5_2_5"/>
<dbReference type="OrthoDB" id="9795769at2"/>
<dbReference type="UniPathway" id="UPA00031">
    <property type="reaction ID" value="UER00008"/>
</dbReference>
<dbReference type="Proteomes" id="UP000001963">
    <property type="component" value="Chromosome"/>
</dbReference>
<dbReference type="GO" id="GO:0005737">
    <property type="term" value="C:cytoplasm"/>
    <property type="evidence" value="ECO:0007669"/>
    <property type="project" value="UniProtKB-SubCell"/>
</dbReference>
<dbReference type="GO" id="GO:0000287">
    <property type="term" value="F:magnesium ion binding"/>
    <property type="evidence" value="ECO:0007669"/>
    <property type="project" value="UniProtKB-UniRule"/>
</dbReference>
<dbReference type="GO" id="GO:0004635">
    <property type="term" value="F:phosphoribosyl-AMP cyclohydrolase activity"/>
    <property type="evidence" value="ECO:0007669"/>
    <property type="project" value="UniProtKB-UniRule"/>
</dbReference>
<dbReference type="GO" id="GO:0008270">
    <property type="term" value="F:zinc ion binding"/>
    <property type="evidence" value="ECO:0007669"/>
    <property type="project" value="UniProtKB-UniRule"/>
</dbReference>
<dbReference type="GO" id="GO:0000105">
    <property type="term" value="P:L-histidine biosynthetic process"/>
    <property type="evidence" value="ECO:0007669"/>
    <property type="project" value="UniProtKB-UniRule"/>
</dbReference>
<dbReference type="FunFam" id="3.10.20.810:FF:000001">
    <property type="entry name" value="Histidine biosynthesis bifunctional protein HisIE"/>
    <property type="match status" value="1"/>
</dbReference>
<dbReference type="Gene3D" id="4.10.80.70">
    <property type="match status" value="1"/>
</dbReference>
<dbReference type="Gene3D" id="3.10.20.810">
    <property type="entry name" value="Phosphoribosyl-AMP cyclohydrolase"/>
    <property type="match status" value="1"/>
</dbReference>
<dbReference type="HAMAP" id="MF_01021">
    <property type="entry name" value="HisI"/>
    <property type="match status" value="1"/>
</dbReference>
<dbReference type="InterPro" id="IPR026660">
    <property type="entry name" value="PRA-CH"/>
</dbReference>
<dbReference type="InterPro" id="IPR002496">
    <property type="entry name" value="PRib_AMP_CycHydrolase_dom"/>
</dbReference>
<dbReference type="InterPro" id="IPR038019">
    <property type="entry name" value="PRib_AMP_CycHydrolase_sf"/>
</dbReference>
<dbReference type="NCBIfam" id="NF000768">
    <property type="entry name" value="PRK00051.1"/>
    <property type="match status" value="1"/>
</dbReference>
<dbReference type="PANTHER" id="PTHR42945">
    <property type="entry name" value="HISTIDINE BIOSYNTHESIS BIFUNCTIONAL PROTEIN"/>
    <property type="match status" value="1"/>
</dbReference>
<dbReference type="PANTHER" id="PTHR42945:SF1">
    <property type="entry name" value="HISTIDINE BIOSYNTHESIS BIFUNCTIONAL PROTEIN HIS7"/>
    <property type="match status" value="1"/>
</dbReference>
<dbReference type="Pfam" id="PF01502">
    <property type="entry name" value="PRA-CH"/>
    <property type="match status" value="1"/>
</dbReference>
<dbReference type="SUPFAM" id="SSF141734">
    <property type="entry name" value="HisI-like"/>
    <property type="match status" value="1"/>
</dbReference>
<evidence type="ECO:0000255" key="1">
    <source>
        <dbReference type="HAMAP-Rule" id="MF_01021"/>
    </source>
</evidence>
<keyword id="KW-0028">Amino-acid biosynthesis</keyword>
<keyword id="KW-0963">Cytoplasm</keyword>
<keyword id="KW-0368">Histidine biosynthesis</keyword>
<keyword id="KW-0378">Hydrolase</keyword>
<keyword id="KW-0460">Magnesium</keyword>
<keyword id="KW-0479">Metal-binding</keyword>
<keyword id="KW-1185">Reference proteome</keyword>
<keyword id="KW-0862">Zinc</keyword>
<gene>
    <name evidence="1" type="primary">hisI</name>
    <name type="ordered locus">GbCGDNIH1_0969</name>
</gene>
<comment type="function">
    <text evidence="1">Catalyzes the hydrolysis of the adenine ring of phosphoribosyl-AMP.</text>
</comment>
<comment type="catalytic activity">
    <reaction evidence="1">
        <text>1-(5-phospho-beta-D-ribosyl)-5'-AMP + H2O = 1-(5-phospho-beta-D-ribosyl)-5-[(5-phospho-beta-D-ribosylamino)methylideneamino]imidazole-4-carboxamide</text>
        <dbReference type="Rhea" id="RHEA:20049"/>
        <dbReference type="ChEBI" id="CHEBI:15377"/>
        <dbReference type="ChEBI" id="CHEBI:58435"/>
        <dbReference type="ChEBI" id="CHEBI:59457"/>
        <dbReference type="EC" id="3.5.4.19"/>
    </reaction>
</comment>
<comment type="cofactor">
    <cofactor evidence="1">
        <name>Mg(2+)</name>
        <dbReference type="ChEBI" id="CHEBI:18420"/>
    </cofactor>
    <text evidence="1">Binds 1 Mg(2+) ion per subunit.</text>
</comment>
<comment type="cofactor">
    <cofactor evidence="1">
        <name>Zn(2+)</name>
        <dbReference type="ChEBI" id="CHEBI:29105"/>
    </cofactor>
    <text evidence="1">Binds 1 zinc ion per subunit.</text>
</comment>
<comment type="pathway">
    <text evidence="1">Amino-acid biosynthesis; L-histidine biosynthesis; L-histidine from 5-phospho-alpha-D-ribose 1-diphosphate: step 3/9.</text>
</comment>
<comment type="subunit">
    <text evidence="1">Homodimer.</text>
</comment>
<comment type="subcellular location">
    <subcellularLocation>
        <location evidence="1">Cytoplasm</location>
    </subcellularLocation>
</comment>
<comment type="similarity">
    <text evidence="1">Belongs to the PRA-CH family.</text>
</comment>
<accession>Q0BTI5</accession>